<keyword id="KW-0961">Cell wall biogenesis/degradation</keyword>
<keyword id="KW-0963">Cytoplasm</keyword>
<keyword id="KW-0325">Glycoprotein</keyword>
<keyword id="KW-0333">Golgi apparatus</keyword>
<keyword id="KW-0413">Isomerase</keyword>
<keyword id="KW-1185">Reference proteome</keyword>
<organism>
    <name type="scientific">Arabidopsis thaliana</name>
    <name type="common">Mouse-ear cress</name>
    <dbReference type="NCBI Taxonomy" id="3702"/>
    <lineage>
        <taxon>Eukaryota</taxon>
        <taxon>Viridiplantae</taxon>
        <taxon>Streptophyta</taxon>
        <taxon>Embryophyta</taxon>
        <taxon>Tracheophyta</taxon>
        <taxon>Spermatophyta</taxon>
        <taxon>Magnoliopsida</taxon>
        <taxon>eudicotyledons</taxon>
        <taxon>Gunneridae</taxon>
        <taxon>Pentapetalae</taxon>
        <taxon>rosids</taxon>
        <taxon>malvids</taxon>
        <taxon>Brassicales</taxon>
        <taxon>Brassicaceae</taxon>
        <taxon>Camelineae</taxon>
        <taxon>Arabidopsis</taxon>
    </lineage>
</organism>
<comment type="function">
    <text evidence="3">Probable UDP-L-arabinose mutase involved in the biosynthesis of cell wall non-cellulosic polysaccharides.</text>
</comment>
<comment type="catalytic activity">
    <reaction evidence="3">
        <text>UDP-beta-L-arabinofuranose = UDP-beta-L-arabinopyranose</text>
        <dbReference type="Rhea" id="RHEA:28350"/>
        <dbReference type="ChEBI" id="CHEBI:61457"/>
        <dbReference type="ChEBI" id="CHEBI:61463"/>
        <dbReference type="EC" id="5.4.99.30"/>
    </reaction>
</comment>
<comment type="cofactor">
    <cofactor evidence="2">
        <name>Mn(2+)</name>
        <dbReference type="ChEBI" id="CHEBI:29035"/>
    </cofactor>
    <cofactor evidence="2">
        <name>Mg(2+)</name>
        <dbReference type="ChEBI" id="CHEBI:18420"/>
    </cofactor>
</comment>
<comment type="subunit">
    <text evidence="4">Heteromers with RGP1 and RGP2.</text>
</comment>
<comment type="subcellular location">
    <subcellularLocation>
        <location evidence="4">Cytoplasm</location>
        <location evidence="4">Cytosol</location>
    </subcellularLocation>
    <subcellularLocation>
        <location evidence="4">Golgi apparatus</location>
    </subcellularLocation>
    <text>Soluble and membrane-associated.</text>
</comment>
<comment type="tissue specificity">
    <text evidence="4">Specifically expressed in developing seeds.</text>
</comment>
<comment type="domain">
    <text evidence="2">The conserved DXD motif is involved in enzyme activity.</text>
</comment>
<comment type="PTM">
    <text evidence="3">Reversibly glycosylated in vitro by UDP-glucose, UDP-xylose and UDP-galactose, but not UDP-mannose.</text>
</comment>
<comment type="similarity">
    <text evidence="6">Belongs to the RGP family.</text>
</comment>
<feature type="chain" id="PRO_0000410987" description="Probable UDP-arabinopyranose mutase 4">
    <location>
        <begin position="1"/>
        <end position="364"/>
    </location>
</feature>
<feature type="short sequence motif" description="DXD motif" evidence="2">
    <location>
        <begin position="106"/>
        <end position="108"/>
    </location>
</feature>
<feature type="site" description="Required for activity" evidence="2">
    <location>
        <position position="154"/>
    </location>
</feature>
<feature type="site" description="Required for activity" evidence="2">
    <location>
        <position position="161"/>
    </location>
</feature>
<feature type="glycosylation site" description="N-linked (Glc...) arginine" evidence="1">
    <location>
        <position position="154"/>
    </location>
</feature>
<name>RGP4_ARATH</name>
<accession>Q9LUE6</accession>
<gene>
    <name evidence="5" type="primary">RGP4</name>
    <name evidence="7" type="ordered locus">At5g50750</name>
    <name evidence="8" type="ORF">MFB16.25</name>
</gene>
<proteinExistence type="evidence at protein level"/>
<sequence>MAGYNLEAIEAAPLKDDLDIVIPTIRSLDFLEQWRPFLHHYHLIIVQDGDPSIKIRVPEGYDYELYNRNDINRILGPRANCISYKDGGCRCFGFMVSKKKYIYTIDDDCFVAKDPSGKDINVIAQHIKNLETPSTPHYFNTLYDPFRDGTDFVRGYPFSLREGVQTAISHGLWLNIPDYDAPTQLVKPRERNTRYVDAVMTIPKRVLYPMCGMNLAFNRELVGPAMYFGLMGEGQPISRYDDMWAGWAAKVVCDHLGFGVKTGLPYLWHSKASNPFVNLKKEHKGLHWQEDMVPFFQNLRLSKESDTAAKCYMEISNMTKEKLTKVDPYFEKLADAMVVWIEAWEELNPPVKKKQSDGKDVKAK</sequence>
<protein>
    <recommendedName>
        <fullName evidence="6">Probable UDP-arabinopyranose mutase 4</fullName>
        <ecNumber evidence="3">5.4.99.30</ecNumber>
    </recommendedName>
    <alternativeName>
        <fullName evidence="5">Reversibly glycosylated polypeptide 4</fullName>
        <shortName evidence="5">AtRGP4</shortName>
    </alternativeName>
    <alternativeName>
        <fullName evidence="6">UDP-L-arabinose mutase 4</fullName>
    </alternativeName>
</protein>
<evidence type="ECO:0000250" key="1">
    <source>
        <dbReference type="UniProtKB" id="P80607"/>
    </source>
</evidence>
<evidence type="ECO:0000250" key="2">
    <source>
        <dbReference type="UniProtKB" id="Q8H8T0"/>
    </source>
</evidence>
<evidence type="ECO:0000250" key="3">
    <source>
        <dbReference type="UniProtKB" id="Q9SRT9"/>
    </source>
</evidence>
<evidence type="ECO:0000269" key="4">
    <source>
    </source>
</evidence>
<evidence type="ECO:0000303" key="5">
    <source>
    </source>
</evidence>
<evidence type="ECO:0000305" key="6"/>
<evidence type="ECO:0000312" key="7">
    <source>
        <dbReference type="Araport" id="AT5G50750"/>
    </source>
</evidence>
<evidence type="ECO:0000312" key="8">
    <source>
        <dbReference type="EMBL" id="BAA96988.1"/>
    </source>
</evidence>
<reference key="1">
    <citation type="submission" date="2000-12" db="EMBL/GenBank/DDBJ databases">
        <title>Arabidopsis reversibly glycosylated polypeptides.</title>
        <authorList>
            <person name="Delgado I.J."/>
            <person name="Keegstra K."/>
            <person name="Raikhel N.V."/>
        </authorList>
    </citation>
    <scope>NUCLEOTIDE SEQUENCE [MRNA]</scope>
</reference>
<reference key="2">
    <citation type="journal article" date="2000" name="DNA Res.">
        <title>Structural analysis of Arabidopsis thaliana chromosome 5. X. Sequence features of the regions of 3,076,755 bp covered by sixty P1 and TAC clones.</title>
        <authorList>
            <person name="Sato S."/>
            <person name="Nakamura Y."/>
            <person name="Kaneko T."/>
            <person name="Katoh T."/>
            <person name="Asamizu E."/>
            <person name="Kotani H."/>
            <person name="Tabata S."/>
        </authorList>
    </citation>
    <scope>NUCLEOTIDE SEQUENCE [LARGE SCALE GENOMIC DNA]</scope>
    <source>
        <strain>cv. Columbia</strain>
    </source>
</reference>
<reference key="3">
    <citation type="journal article" date="2017" name="Plant J.">
        <title>Araport11: a complete reannotation of the Arabidopsis thaliana reference genome.</title>
        <authorList>
            <person name="Cheng C.Y."/>
            <person name="Krishnakumar V."/>
            <person name="Chan A.P."/>
            <person name="Thibaud-Nissen F."/>
            <person name="Schobel S."/>
            <person name="Town C.D."/>
        </authorList>
    </citation>
    <scope>GENOME REANNOTATION</scope>
    <source>
        <strain>cv. Columbia</strain>
    </source>
</reference>
<reference key="4">
    <citation type="journal article" date="2003" name="Science">
        <title>Empirical analysis of transcriptional activity in the Arabidopsis genome.</title>
        <authorList>
            <person name="Yamada K."/>
            <person name="Lim J."/>
            <person name="Dale J.M."/>
            <person name="Chen H."/>
            <person name="Shinn P."/>
            <person name="Palm C.J."/>
            <person name="Southwick A.M."/>
            <person name="Wu H.C."/>
            <person name="Kim C.J."/>
            <person name="Nguyen M."/>
            <person name="Pham P.K."/>
            <person name="Cheuk R.F."/>
            <person name="Karlin-Newmann G."/>
            <person name="Liu S.X."/>
            <person name="Lam B."/>
            <person name="Sakano H."/>
            <person name="Wu T."/>
            <person name="Yu G."/>
            <person name="Miranda M."/>
            <person name="Quach H.L."/>
            <person name="Tripp M."/>
            <person name="Chang C.H."/>
            <person name="Lee J.M."/>
            <person name="Toriumi M.J."/>
            <person name="Chan M.M."/>
            <person name="Tang C.C."/>
            <person name="Onodera C.S."/>
            <person name="Deng J.M."/>
            <person name="Akiyama K."/>
            <person name="Ansari Y."/>
            <person name="Arakawa T."/>
            <person name="Banh J."/>
            <person name="Banno F."/>
            <person name="Bowser L."/>
            <person name="Brooks S.Y."/>
            <person name="Carninci P."/>
            <person name="Chao Q."/>
            <person name="Choy N."/>
            <person name="Enju A."/>
            <person name="Goldsmith A.D."/>
            <person name="Gurjal M."/>
            <person name="Hansen N.F."/>
            <person name="Hayashizaki Y."/>
            <person name="Johnson-Hopson C."/>
            <person name="Hsuan V.W."/>
            <person name="Iida K."/>
            <person name="Karnes M."/>
            <person name="Khan S."/>
            <person name="Koesema E."/>
            <person name="Ishida J."/>
            <person name="Jiang P.X."/>
            <person name="Jones T."/>
            <person name="Kawai J."/>
            <person name="Kamiya A."/>
            <person name="Meyers C."/>
            <person name="Nakajima M."/>
            <person name="Narusaka M."/>
            <person name="Seki M."/>
            <person name="Sakurai T."/>
            <person name="Satou M."/>
            <person name="Tamse R."/>
            <person name="Vaysberg M."/>
            <person name="Wallender E.K."/>
            <person name="Wong C."/>
            <person name="Yamamura Y."/>
            <person name="Yuan S."/>
            <person name="Shinozaki K."/>
            <person name="Davis R.W."/>
            <person name="Theologis A."/>
            <person name="Ecker J.R."/>
        </authorList>
    </citation>
    <scope>NUCLEOTIDE SEQUENCE [LARGE SCALE MRNA]</scope>
    <source>
        <strain>cv. Columbia</strain>
    </source>
</reference>
<reference key="5">
    <citation type="journal article" date="2011" name="Plant Cell">
        <title>The interconversion of UDP-L-arabinopyranose and UDP-L-arabinofuranose is indispensable for plant development in Arabidopsis.</title>
        <authorList>
            <person name="Rautengarten C."/>
            <person name="Ebert B."/>
            <person name="Herter T."/>
            <person name="Petzold C.J."/>
            <person name="Ishii T."/>
            <person name="Mukhopadhyay A."/>
            <person name="Usadel B."/>
            <person name="Scheller H.V."/>
        </authorList>
    </citation>
    <scope>SUBUNIT</scope>
    <scope>SUBCELLULAR LOCATION</scope>
    <scope>TISSUE SPECIFICITY</scope>
    <scope>IDENTIFICATION BY MASS SPECTROMETRY</scope>
</reference>
<dbReference type="EC" id="5.4.99.30" evidence="3"/>
<dbReference type="EMBL" id="AF329280">
    <property type="protein sequence ID" value="AAK60126.1"/>
    <property type="molecule type" value="mRNA"/>
</dbReference>
<dbReference type="EMBL" id="AB023037">
    <property type="protein sequence ID" value="BAA96988.1"/>
    <property type="molecule type" value="Genomic_DNA"/>
</dbReference>
<dbReference type="EMBL" id="CP002688">
    <property type="protein sequence ID" value="AED95988.1"/>
    <property type="molecule type" value="Genomic_DNA"/>
</dbReference>
<dbReference type="EMBL" id="BT004025">
    <property type="protein sequence ID" value="AAO42061.1"/>
    <property type="molecule type" value="mRNA"/>
</dbReference>
<dbReference type="EMBL" id="BT005194">
    <property type="protein sequence ID" value="AAO50727.1"/>
    <property type="molecule type" value="mRNA"/>
</dbReference>
<dbReference type="RefSeq" id="NP_199888.1">
    <property type="nucleotide sequence ID" value="NM_124453.3"/>
</dbReference>
<dbReference type="SMR" id="Q9LUE6"/>
<dbReference type="FunCoup" id="Q9LUE6">
    <property type="interactions" value="140"/>
</dbReference>
<dbReference type="STRING" id="3702.Q9LUE6"/>
<dbReference type="CAZy" id="GT75">
    <property type="family name" value="Glycosyltransferase Family 75"/>
</dbReference>
<dbReference type="GlyCosmos" id="Q9LUE6">
    <property type="glycosylation" value="1 site, No reported glycans"/>
</dbReference>
<dbReference type="PaxDb" id="3702-AT5G50750.1"/>
<dbReference type="ProteomicsDB" id="236936"/>
<dbReference type="DNASU" id="835147"/>
<dbReference type="EnsemblPlants" id="AT5G50750.1">
    <property type="protein sequence ID" value="AT5G50750.1"/>
    <property type="gene ID" value="AT5G50750"/>
</dbReference>
<dbReference type="GeneID" id="835147"/>
<dbReference type="Gramene" id="AT5G50750.1">
    <property type="protein sequence ID" value="AT5G50750.1"/>
    <property type="gene ID" value="AT5G50750"/>
</dbReference>
<dbReference type="KEGG" id="ath:AT5G50750"/>
<dbReference type="Araport" id="AT5G50750"/>
<dbReference type="TAIR" id="AT5G50750">
    <property type="gene designation" value="RGP4"/>
</dbReference>
<dbReference type="eggNOG" id="ENOG502QSDP">
    <property type="taxonomic scope" value="Eukaryota"/>
</dbReference>
<dbReference type="HOGENOM" id="CLU_061976_0_0_1"/>
<dbReference type="InParanoid" id="Q9LUE6"/>
<dbReference type="OMA" id="GWCTKVV"/>
<dbReference type="OrthoDB" id="1020896at2759"/>
<dbReference type="PhylomeDB" id="Q9LUE6"/>
<dbReference type="BioCyc" id="ARA:AT5G50750-MONOMER"/>
<dbReference type="PRO" id="PR:Q9LUE6"/>
<dbReference type="Proteomes" id="UP000006548">
    <property type="component" value="Chromosome 5"/>
</dbReference>
<dbReference type="ExpressionAtlas" id="Q9LUE6">
    <property type="expression patterns" value="baseline and differential"/>
</dbReference>
<dbReference type="GO" id="GO:0005829">
    <property type="term" value="C:cytosol"/>
    <property type="evidence" value="ECO:0000314"/>
    <property type="project" value="UniProtKB"/>
</dbReference>
<dbReference type="GO" id="GO:0005794">
    <property type="term" value="C:Golgi apparatus"/>
    <property type="evidence" value="ECO:0000314"/>
    <property type="project" value="UniProtKB"/>
</dbReference>
<dbReference type="GO" id="GO:0009536">
    <property type="term" value="C:plastid"/>
    <property type="evidence" value="ECO:0007005"/>
    <property type="project" value="TAIR"/>
</dbReference>
<dbReference type="GO" id="GO:0016866">
    <property type="term" value="F:intramolecular transferase activity"/>
    <property type="evidence" value="ECO:0007669"/>
    <property type="project" value="InterPro"/>
</dbReference>
<dbReference type="GO" id="GO:0071555">
    <property type="term" value="P:cell wall organization"/>
    <property type="evidence" value="ECO:0007669"/>
    <property type="project" value="UniProtKB-KW"/>
</dbReference>
<dbReference type="GO" id="GO:0071669">
    <property type="term" value="P:plant-type cell wall organization or biogenesis"/>
    <property type="evidence" value="ECO:0007669"/>
    <property type="project" value="InterPro"/>
</dbReference>
<dbReference type="InterPro" id="IPR029044">
    <property type="entry name" value="Nucleotide-diphossugar_trans"/>
</dbReference>
<dbReference type="InterPro" id="IPR004901">
    <property type="entry name" value="RGP"/>
</dbReference>
<dbReference type="InterPro" id="IPR037595">
    <property type="entry name" value="RGP_fam"/>
</dbReference>
<dbReference type="PANTHER" id="PTHR31682:SF39">
    <property type="entry name" value="UDP-ARABINOPYRANOSE MUTASE 4-RELATED"/>
    <property type="match status" value="1"/>
</dbReference>
<dbReference type="PANTHER" id="PTHR31682">
    <property type="entry name" value="UDP-ARABINOSE MUTASE"/>
    <property type="match status" value="1"/>
</dbReference>
<dbReference type="Pfam" id="PF03214">
    <property type="entry name" value="RGP"/>
    <property type="match status" value="1"/>
</dbReference>
<dbReference type="PIRSF" id="PIRSF016429">
    <property type="entry name" value="UPTG"/>
    <property type="match status" value="1"/>
</dbReference>
<dbReference type="SUPFAM" id="SSF53448">
    <property type="entry name" value="Nucleotide-diphospho-sugar transferases"/>
    <property type="match status" value="1"/>
</dbReference>